<keyword id="KW-0963">Cytoplasm</keyword>
<keyword id="KW-0489">Methyltransferase</keyword>
<keyword id="KW-1185">Reference proteome</keyword>
<keyword id="KW-0949">S-adenosyl-L-methionine</keyword>
<keyword id="KW-0808">Transferase</keyword>
<accession>Q8R6G7</accession>
<reference key="1">
    <citation type="journal article" date="2002" name="J. Bacteriol.">
        <title>Genome sequence and analysis of the oral bacterium Fusobacterium nucleatum strain ATCC 25586.</title>
        <authorList>
            <person name="Kapatral V."/>
            <person name="Anderson I."/>
            <person name="Ivanova N."/>
            <person name="Reznik G."/>
            <person name="Los T."/>
            <person name="Lykidis A."/>
            <person name="Bhattacharyya A."/>
            <person name="Bartman A."/>
            <person name="Gardner W."/>
            <person name="Grechkin G."/>
            <person name="Zhu L."/>
            <person name="Vasieva O."/>
            <person name="Chu L."/>
            <person name="Kogan Y."/>
            <person name="Chaga O."/>
            <person name="Goltsman E."/>
            <person name="Bernal A."/>
            <person name="Larsen N."/>
            <person name="D'Souza M."/>
            <person name="Walunas T."/>
            <person name="Pusch G."/>
            <person name="Haselkorn R."/>
            <person name="Fonstein M."/>
            <person name="Kyrpides N.C."/>
            <person name="Overbeek R."/>
        </authorList>
    </citation>
    <scope>NUCLEOTIDE SEQUENCE [LARGE SCALE GENOMIC DNA]</scope>
    <source>
        <strain>ATCC 25586 / DSM 15643 / BCRC 10681 / CIP 101130 / JCM 8532 / KCTC 2640 / LMG 13131 / VPI 4355</strain>
    </source>
</reference>
<name>PRMA_FUSNN</name>
<sequence length="312" mass="36069">MKMKVLEAKIIYESDDLEKYKKIISDIFYSFGVTGLKIEEPILNKDPLNFYKDEKQFLISENSVSAYFPLNIYSEKRKKVLEETFAEKFSEDEDIVYNLDFYEYDEEDYQNSWKKYLFVEKVSEKFVVKPTWREYEKQDNELVIELDPGRAFGTGSHPTTSLLLKLMEEQDFSNKSVIDIGTGSGILMIAGKILGAGEVYGTDIDEFSMEVAKENLILNNISLNDVKLLKGNLLEVIENKKFDIVVCNILADILVKLLDEIKYILKENSIVLFSGIIEDKLNEVISKAEDVGLEVVEVKADKEWRAVYFKRK</sequence>
<gene>
    <name evidence="1" type="primary">prmA</name>
    <name type="ordered locus">FN1608</name>
</gene>
<organism>
    <name type="scientific">Fusobacterium nucleatum subsp. nucleatum (strain ATCC 25586 / DSM 15643 / BCRC 10681 / CIP 101130 / JCM 8532 / KCTC 2640 / LMG 13131 / VPI 4355)</name>
    <dbReference type="NCBI Taxonomy" id="190304"/>
    <lineage>
        <taxon>Bacteria</taxon>
        <taxon>Fusobacteriati</taxon>
        <taxon>Fusobacteriota</taxon>
        <taxon>Fusobacteriia</taxon>
        <taxon>Fusobacteriales</taxon>
        <taxon>Fusobacteriaceae</taxon>
        <taxon>Fusobacterium</taxon>
    </lineage>
</organism>
<dbReference type="EC" id="2.1.1.-" evidence="1"/>
<dbReference type="EMBL" id="AE009951">
    <property type="protein sequence ID" value="AAL93723.1"/>
    <property type="molecule type" value="Genomic_DNA"/>
</dbReference>
<dbReference type="RefSeq" id="NP_602424.1">
    <property type="nucleotide sequence ID" value="NC_003454.1"/>
</dbReference>
<dbReference type="SMR" id="Q8R6G7"/>
<dbReference type="FunCoup" id="Q8R6G7">
    <property type="interactions" value="273"/>
</dbReference>
<dbReference type="STRING" id="190304.FN1608"/>
<dbReference type="PaxDb" id="190304-FN1608"/>
<dbReference type="EnsemblBacteria" id="AAL93723">
    <property type="protein sequence ID" value="AAL93723"/>
    <property type="gene ID" value="FN1608"/>
</dbReference>
<dbReference type="KEGG" id="fnu:FN1608"/>
<dbReference type="PATRIC" id="fig|190304.8.peg.100"/>
<dbReference type="eggNOG" id="COG2264">
    <property type="taxonomic scope" value="Bacteria"/>
</dbReference>
<dbReference type="HOGENOM" id="CLU_049382_0_1_0"/>
<dbReference type="InParanoid" id="Q8R6G7"/>
<dbReference type="BioCyc" id="FNUC190304:G1FZS-111-MONOMER"/>
<dbReference type="Proteomes" id="UP000002521">
    <property type="component" value="Chromosome"/>
</dbReference>
<dbReference type="GO" id="GO:0005737">
    <property type="term" value="C:cytoplasm"/>
    <property type="evidence" value="ECO:0007669"/>
    <property type="project" value="UniProtKB-SubCell"/>
</dbReference>
<dbReference type="GO" id="GO:0008276">
    <property type="term" value="F:protein methyltransferase activity"/>
    <property type="evidence" value="ECO:0000318"/>
    <property type="project" value="GO_Central"/>
</dbReference>
<dbReference type="GO" id="GO:0016279">
    <property type="term" value="F:protein-lysine N-methyltransferase activity"/>
    <property type="evidence" value="ECO:0007669"/>
    <property type="project" value="RHEA"/>
</dbReference>
<dbReference type="GO" id="GO:0032259">
    <property type="term" value="P:methylation"/>
    <property type="evidence" value="ECO:0007669"/>
    <property type="project" value="UniProtKB-KW"/>
</dbReference>
<dbReference type="CDD" id="cd02440">
    <property type="entry name" value="AdoMet_MTases"/>
    <property type="match status" value="1"/>
</dbReference>
<dbReference type="Gene3D" id="3.40.50.150">
    <property type="entry name" value="Vaccinia Virus protein VP39"/>
    <property type="match status" value="1"/>
</dbReference>
<dbReference type="HAMAP" id="MF_00735">
    <property type="entry name" value="Methyltr_PrmA"/>
    <property type="match status" value="1"/>
</dbReference>
<dbReference type="InterPro" id="IPR050078">
    <property type="entry name" value="Ribosomal_L11_MeTrfase_PrmA"/>
</dbReference>
<dbReference type="InterPro" id="IPR004498">
    <property type="entry name" value="Ribosomal_PrmA_MeTrfase"/>
</dbReference>
<dbReference type="InterPro" id="IPR029063">
    <property type="entry name" value="SAM-dependent_MTases_sf"/>
</dbReference>
<dbReference type="NCBIfam" id="TIGR00406">
    <property type="entry name" value="prmA"/>
    <property type="match status" value="1"/>
</dbReference>
<dbReference type="PANTHER" id="PTHR43648">
    <property type="entry name" value="ELECTRON TRANSFER FLAVOPROTEIN BETA SUBUNIT LYSINE METHYLTRANSFERASE"/>
    <property type="match status" value="1"/>
</dbReference>
<dbReference type="PANTHER" id="PTHR43648:SF1">
    <property type="entry name" value="ELECTRON TRANSFER FLAVOPROTEIN BETA SUBUNIT LYSINE METHYLTRANSFERASE"/>
    <property type="match status" value="1"/>
</dbReference>
<dbReference type="Pfam" id="PF06325">
    <property type="entry name" value="PrmA"/>
    <property type="match status" value="1"/>
</dbReference>
<dbReference type="PIRSF" id="PIRSF000401">
    <property type="entry name" value="RPL11_MTase"/>
    <property type="match status" value="1"/>
</dbReference>
<dbReference type="SUPFAM" id="SSF53335">
    <property type="entry name" value="S-adenosyl-L-methionine-dependent methyltransferases"/>
    <property type="match status" value="1"/>
</dbReference>
<feature type="chain" id="PRO_0000192262" description="Ribosomal protein L11 methyltransferase">
    <location>
        <begin position="1"/>
        <end position="312"/>
    </location>
</feature>
<feature type="binding site" evidence="1">
    <location>
        <position position="160"/>
    </location>
    <ligand>
        <name>S-adenosyl-L-methionine</name>
        <dbReference type="ChEBI" id="CHEBI:59789"/>
    </ligand>
</feature>
<feature type="binding site" evidence="1">
    <location>
        <position position="181"/>
    </location>
    <ligand>
        <name>S-adenosyl-L-methionine</name>
        <dbReference type="ChEBI" id="CHEBI:59789"/>
    </ligand>
</feature>
<feature type="binding site" evidence="1">
    <location>
        <position position="203"/>
    </location>
    <ligand>
        <name>S-adenosyl-L-methionine</name>
        <dbReference type="ChEBI" id="CHEBI:59789"/>
    </ligand>
</feature>
<feature type="binding site" evidence="1">
    <location>
        <position position="248"/>
    </location>
    <ligand>
        <name>S-adenosyl-L-methionine</name>
        <dbReference type="ChEBI" id="CHEBI:59789"/>
    </ligand>
</feature>
<protein>
    <recommendedName>
        <fullName evidence="1">Ribosomal protein L11 methyltransferase</fullName>
        <shortName evidence="1">L11 Mtase</shortName>
        <ecNumber evidence="1">2.1.1.-</ecNumber>
    </recommendedName>
</protein>
<comment type="function">
    <text evidence="1">Methylates ribosomal protein L11.</text>
</comment>
<comment type="catalytic activity">
    <reaction evidence="1">
        <text>L-lysyl-[protein] + 3 S-adenosyl-L-methionine = N(6),N(6),N(6)-trimethyl-L-lysyl-[protein] + 3 S-adenosyl-L-homocysteine + 3 H(+)</text>
        <dbReference type="Rhea" id="RHEA:54192"/>
        <dbReference type="Rhea" id="RHEA-COMP:9752"/>
        <dbReference type="Rhea" id="RHEA-COMP:13826"/>
        <dbReference type="ChEBI" id="CHEBI:15378"/>
        <dbReference type="ChEBI" id="CHEBI:29969"/>
        <dbReference type="ChEBI" id="CHEBI:57856"/>
        <dbReference type="ChEBI" id="CHEBI:59789"/>
        <dbReference type="ChEBI" id="CHEBI:61961"/>
    </reaction>
</comment>
<comment type="subcellular location">
    <subcellularLocation>
        <location evidence="1">Cytoplasm</location>
    </subcellularLocation>
</comment>
<comment type="similarity">
    <text evidence="1">Belongs to the methyltransferase superfamily. PrmA family.</text>
</comment>
<proteinExistence type="inferred from homology"/>
<evidence type="ECO:0000255" key="1">
    <source>
        <dbReference type="HAMAP-Rule" id="MF_00735"/>
    </source>
</evidence>